<keyword id="KW-0004">4Fe-4S</keyword>
<keyword id="KW-0963">Cytoplasm</keyword>
<keyword id="KW-0408">Iron</keyword>
<keyword id="KW-0411">Iron-sulfur</keyword>
<keyword id="KW-0479">Metal-binding</keyword>
<keyword id="KW-1185">Reference proteome</keyword>
<keyword id="KW-0949">S-adenosyl-L-methionine</keyword>
<keyword id="KW-0808">Transferase</keyword>
<keyword id="KW-0819">tRNA processing</keyword>
<reference key="1">
    <citation type="journal article" date="2008" name="PLoS ONE">
        <title>Genetic basis of virulence attenuation revealed by comparative genomic analysis of Mycobacterium tuberculosis strain H37Ra versus H37Rv.</title>
        <authorList>
            <person name="Zheng H."/>
            <person name="Lu L."/>
            <person name="Wang B."/>
            <person name="Pu S."/>
            <person name="Zhang X."/>
            <person name="Zhu G."/>
            <person name="Shi W."/>
            <person name="Zhang L."/>
            <person name="Wang H."/>
            <person name="Wang S."/>
            <person name="Zhao G."/>
            <person name="Zhang Y."/>
        </authorList>
    </citation>
    <scope>NUCLEOTIDE SEQUENCE [LARGE SCALE GENOMIC DNA]</scope>
    <source>
        <strain>ATCC 25177 / H37Ra</strain>
    </source>
</reference>
<organism>
    <name type="scientific">Mycobacterium tuberculosis (strain ATCC 25177 / H37Ra)</name>
    <dbReference type="NCBI Taxonomy" id="419947"/>
    <lineage>
        <taxon>Bacteria</taxon>
        <taxon>Bacillati</taxon>
        <taxon>Actinomycetota</taxon>
        <taxon>Actinomycetes</taxon>
        <taxon>Mycobacteriales</taxon>
        <taxon>Mycobacteriaceae</taxon>
        <taxon>Mycobacterium</taxon>
        <taxon>Mycobacterium tuberculosis complex</taxon>
    </lineage>
</organism>
<accession>A5U685</accession>
<sequence length="545" mass="58381">MSSASPLARCCDEATPSAGPRAAQPPYHGPVTSMVAHDAAAGVTGEGAGPPVRRAPARTYQVRTYGCQMNVHDSERLAGLLEAAGYRRATDGSEADVVVFNTCAVRENADNRLYGNLSHLAPRKRANPDMQIAVGGCLAQKDRDAVLRRAPWVDVVFGTHNIGSLPTLLERARHNKVAQVEIAEALQQFPSSLPSSRESAYAAWVSISVGCNNSCTFCIVPSLRGREVDRSPADILAEVRSLVNDGVLEVTLLGQNVNAYGVSFADPALPRNRGAFAELLRACGDIDGLERVRFTSPHPAEFTDDVIEAMAQTRNVCPALHMPLQSGSDRILRAMRRSYRAERYLGIIERVRAAIPHAAITTDLIVGFPGETEEDFAATLDVVRRARFAAAFTFQYSKRPGTPAAQLDGQLPKAVVQERYERLIALQEQISLEANRALVGQAVEVLVATGEGRKDTVTARMSGRARDGRLVHFTAGQPRVRPGDVITTKVTEAAPHHLIADAGVLTHRRTRAGDAHTAGQPGRAVGLGMPGVGLPVSAAKPGGCR</sequence>
<name>MIAB_MYCTA</name>
<proteinExistence type="inferred from homology"/>
<protein>
    <recommendedName>
        <fullName evidence="1">tRNA-2-methylthio-N(6)-dimethylallyladenosine synthase</fullName>
        <ecNumber evidence="1">2.8.4.3</ecNumber>
    </recommendedName>
    <alternativeName>
        <fullName evidence="1">(Dimethylallyl)adenosine tRNA methylthiotransferase MiaB</fullName>
    </alternativeName>
    <alternativeName>
        <fullName evidence="1">tRNA-i(6)A37 methylthiotransferase</fullName>
    </alternativeName>
</protein>
<feature type="chain" id="PRO_0000374394" description="tRNA-2-methylthio-N(6)-dimethylallyladenosine synthase">
    <location>
        <begin position="1"/>
        <end position="545"/>
    </location>
</feature>
<feature type="domain" description="MTTase N-terminal" evidence="1">
    <location>
        <begin position="58"/>
        <end position="174"/>
    </location>
</feature>
<feature type="domain" description="Radical SAM core" evidence="2">
    <location>
        <begin position="197"/>
        <end position="433"/>
    </location>
</feature>
<feature type="domain" description="TRAM" evidence="1">
    <location>
        <begin position="436"/>
        <end position="504"/>
    </location>
</feature>
<feature type="region of interest" description="Disordered" evidence="3">
    <location>
        <begin position="1"/>
        <end position="32"/>
    </location>
</feature>
<feature type="binding site" evidence="1">
    <location>
        <position position="67"/>
    </location>
    <ligand>
        <name>[4Fe-4S] cluster</name>
        <dbReference type="ChEBI" id="CHEBI:49883"/>
        <label>1</label>
    </ligand>
</feature>
<feature type="binding site" evidence="1">
    <location>
        <position position="103"/>
    </location>
    <ligand>
        <name>[4Fe-4S] cluster</name>
        <dbReference type="ChEBI" id="CHEBI:49883"/>
        <label>1</label>
    </ligand>
</feature>
<feature type="binding site" evidence="1">
    <location>
        <position position="137"/>
    </location>
    <ligand>
        <name>[4Fe-4S] cluster</name>
        <dbReference type="ChEBI" id="CHEBI:49883"/>
        <label>1</label>
    </ligand>
</feature>
<feature type="binding site" evidence="1">
    <location>
        <position position="211"/>
    </location>
    <ligand>
        <name>[4Fe-4S] cluster</name>
        <dbReference type="ChEBI" id="CHEBI:49883"/>
        <label>2</label>
        <note>4Fe-4S-S-AdoMet</note>
    </ligand>
</feature>
<feature type="binding site" evidence="1">
    <location>
        <position position="215"/>
    </location>
    <ligand>
        <name>[4Fe-4S] cluster</name>
        <dbReference type="ChEBI" id="CHEBI:49883"/>
        <label>2</label>
        <note>4Fe-4S-S-AdoMet</note>
    </ligand>
</feature>
<feature type="binding site" evidence="1">
    <location>
        <position position="218"/>
    </location>
    <ligand>
        <name>[4Fe-4S] cluster</name>
        <dbReference type="ChEBI" id="CHEBI:49883"/>
        <label>2</label>
        <note>4Fe-4S-S-AdoMet</note>
    </ligand>
</feature>
<comment type="function">
    <text evidence="1">Catalyzes the methylthiolation of N6-(dimethylallyl)adenosine (i(6)A), leading to the formation of 2-methylthio-N6-(dimethylallyl)adenosine (ms(2)i(6)A) at position 37 in tRNAs that read codons beginning with uridine.</text>
</comment>
<comment type="catalytic activity">
    <reaction evidence="1">
        <text>N(6)-dimethylallyladenosine(37) in tRNA + (sulfur carrier)-SH + AH2 + 2 S-adenosyl-L-methionine = 2-methylsulfanyl-N(6)-dimethylallyladenosine(37) in tRNA + (sulfur carrier)-H + 5'-deoxyadenosine + L-methionine + A + S-adenosyl-L-homocysteine + 2 H(+)</text>
        <dbReference type="Rhea" id="RHEA:37067"/>
        <dbReference type="Rhea" id="RHEA-COMP:10375"/>
        <dbReference type="Rhea" id="RHEA-COMP:10376"/>
        <dbReference type="Rhea" id="RHEA-COMP:14737"/>
        <dbReference type="Rhea" id="RHEA-COMP:14739"/>
        <dbReference type="ChEBI" id="CHEBI:13193"/>
        <dbReference type="ChEBI" id="CHEBI:15378"/>
        <dbReference type="ChEBI" id="CHEBI:17319"/>
        <dbReference type="ChEBI" id="CHEBI:17499"/>
        <dbReference type="ChEBI" id="CHEBI:29917"/>
        <dbReference type="ChEBI" id="CHEBI:57844"/>
        <dbReference type="ChEBI" id="CHEBI:57856"/>
        <dbReference type="ChEBI" id="CHEBI:59789"/>
        <dbReference type="ChEBI" id="CHEBI:64428"/>
        <dbReference type="ChEBI" id="CHEBI:74415"/>
        <dbReference type="ChEBI" id="CHEBI:74417"/>
        <dbReference type="EC" id="2.8.4.3"/>
    </reaction>
</comment>
<comment type="cofactor">
    <cofactor evidence="1">
        <name>[4Fe-4S] cluster</name>
        <dbReference type="ChEBI" id="CHEBI:49883"/>
    </cofactor>
    <text evidence="1">Binds 2 [4Fe-4S] clusters. One cluster is coordinated with 3 cysteines and an exchangeable S-adenosyl-L-methionine.</text>
</comment>
<comment type="subunit">
    <text evidence="1">Monomer.</text>
</comment>
<comment type="subcellular location">
    <subcellularLocation>
        <location evidence="1">Cytoplasm</location>
    </subcellularLocation>
</comment>
<comment type="similarity">
    <text evidence="1">Belongs to the methylthiotransferase family. MiaB subfamily.</text>
</comment>
<comment type="sequence caution" evidence="4">
    <conflict type="erroneous initiation">
        <sequence resource="EMBL-CDS" id="ABQ74535"/>
    </conflict>
    <text>Truncated N-terminus.</text>
</comment>
<evidence type="ECO:0000255" key="1">
    <source>
        <dbReference type="HAMAP-Rule" id="MF_01864"/>
    </source>
</evidence>
<evidence type="ECO:0000255" key="2">
    <source>
        <dbReference type="PROSITE-ProRule" id="PRU01266"/>
    </source>
</evidence>
<evidence type="ECO:0000256" key="3">
    <source>
        <dbReference type="SAM" id="MobiDB-lite"/>
    </source>
</evidence>
<evidence type="ECO:0000305" key="4"/>
<dbReference type="EC" id="2.8.4.3" evidence="1"/>
<dbReference type="EMBL" id="CP000611">
    <property type="protein sequence ID" value="ABQ74535.1"/>
    <property type="status" value="ALT_INIT"/>
    <property type="molecule type" value="Genomic_DNA"/>
</dbReference>
<dbReference type="SMR" id="A5U685"/>
<dbReference type="KEGG" id="mra:MRA_2759"/>
<dbReference type="eggNOG" id="COG0621">
    <property type="taxonomic scope" value="Bacteria"/>
</dbReference>
<dbReference type="HOGENOM" id="CLU_018697_2_2_11"/>
<dbReference type="Proteomes" id="UP000001988">
    <property type="component" value="Chromosome"/>
</dbReference>
<dbReference type="GO" id="GO:0005829">
    <property type="term" value="C:cytosol"/>
    <property type="evidence" value="ECO:0007669"/>
    <property type="project" value="TreeGrafter"/>
</dbReference>
<dbReference type="GO" id="GO:0051539">
    <property type="term" value="F:4 iron, 4 sulfur cluster binding"/>
    <property type="evidence" value="ECO:0007669"/>
    <property type="project" value="UniProtKB-UniRule"/>
</dbReference>
<dbReference type="GO" id="GO:0046872">
    <property type="term" value="F:metal ion binding"/>
    <property type="evidence" value="ECO:0007669"/>
    <property type="project" value="UniProtKB-KW"/>
</dbReference>
<dbReference type="GO" id="GO:0035597">
    <property type="term" value="F:N6-isopentenyladenosine methylthiotransferase activity"/>
    <property type="evidence" value="ECO:0007669"/>
    <property type="project" value="TreeGrafter"/>
</dbReference>
<dbReference type="CDD" id="cd01335">
    <property type="entry name" value="Radical_SAM"/>
    <property type="match status" value="1"/>
</dbReference>
<dbReference type="FunFam" id="3.40.50.12160:FF:000008">
    <property type="entry name" value="tRNA-2-methylthio-N(6)-dimethylallyladenosine synthase"/>
    <property type="match status" value="1"/>
</dbReference>
<dbReference type="FunFam" id="3.80.30.20:FF:000001">
    <property type="entry name" value="tRNA-2-methylthio-N(6)-dimethylallyladenosine synthase 2"/>
    <property type="match status" value="1"/>
</dbReference>
<dbReference type="Gene3D" id="3.40.50.12160">
    <property type="entry name" value="Methylthiotransferase, N-terminal domain"/>
    <property type="match status" value="1"/>
</dbReference>
<dbReference type="Gene3D" id="3.80.30.20">
    <property type="entry name" value="tm_1862 like domain"/>
    <property type="match status" value="1"/>
</dbReference>
<dbReference type="HAMAP" id="MF_01864">
    <property type="entry name" value="tRNA_metthiotr_MiaB"/>
    <property type="match status" value="1"/>
</dbReference>
<dbReference type="InterPro" id="IPR006638">
    <property type="entry name" value="Elp3/MiaA/NifB-like_rSAM"/>
</dbReference>
<dbReference type="InterPro" id="IPR005839">
    <property type="entry name" value="Methylthiotransferase"/>
</dbReference>
<dbReference type="InterPro" id="IPR020612">
    <property type="entry name" value="Methylthiotransferase_CS"/>
</dbReference>
<dbReference type="InterPro" id="IPR013848">
    <property type="entry name" value="Methylthiotransferase_N"/>
</dbReference>
<dbReference type="InterPro" id="IPR038135">
    <property type="entry name" value="Methylthiotransferase_N_sf"/>
</dbReference>
<dbReference type="InterPro" id="IPR006463">
    <property type="entry name" value="MiaB_methiolase"/>
</dbReference>
<dbReference type="InterPro" id="IPR007197">
    <property type="entry name" value="rSAM"/>
</dbReference>
<dbReference type="InterPro" id="IPR023404">
    <property type="entry name" value="rSAM_horseshoe"/>
</dbReference>
<dbReference type="InterPro" id="IPR002792">
    <property type="entry name" value="TRAM_dom"/>
</dbReference>
<dbReference type="NCBIfam" id="TIGR01574">
    <property type="entry name" value="miaB-methiolase"/>
    <property type="match status" value="1"/>
</dbReference>
<dbReference type="NCBIfam" id="TIGR00089">
    <property type="entry name" value="MiaB/RimO family radical SAM methylthiotransferase"/>
    <property type="match status" value="1"/>
</dbReference>
<dbReference type="PANTHER" id="PTHR43020">
    <property type="entry name" value="CDK5 REGULATORY SUBUNIT-ASSOCIATED PROTEIN 1"/>
    <property type="match status" value="1"/>
</dbReference>
<dbReference type="PANTHER" id="PTHR43020:SF2">
    <property type="entry name" value="MITOCHONDRIAL TRNA METHYLTHIOTRANSFERASE CDK5RAP1"/>
    <property type="match status" value="1"/>
</dbReference>
<dbReference type="Pfam" id="PF04055">
    <property type="entry name" value="Radical_SAM"/>
    <property type="match status" value="1"/>
</dbReference>
<dbReference type="Pfam" id="PF00919">
    <property type="entry name" value="UPF0004"/>
    <property type="match status" value="1"/>
</dbReference>
<dbReference type="SFLD" id="SFLDF00273">
    <property type="entry name" value="(dimethylallyl)adenosine_tRNA"/>
    <property type="match status" value="1"/>
</dbReference>
<dbReference type="SFLD" id="SFLDG01082">
    <property type="entry name" value="B12-binding_domain_containing"/>
    <property type="match status" value="1"/>
</dbReference>
<dbReference type="SFLD" id="SFLDG01061">
    <property type="entry name" value="methylthiotransferase"/>
    <property type="match status" value="1"/>
</dbReference>
<dbReference type="SMART" id="SM00729">
    <property type="entry name" value="Elp3"/>
    <property type="match status" value="1"/>
</dbReference>
<dbReference type="SUPFAM" id="SSF102114">
    <property type="entry name" value="Radical SAM enzymes"/>
    <property type="match status" value="1"/>
</dbReference>
<dbReference type="PROSITE" id="PS51449">
    <property type="entry name" value="MTTASE_N"/>
    <property type="match status" value="1"/>
</dbReference>
<dbReference type="PROSITE" id="PS01278">
    <property type="entry name" value="MTTASE_RADICAL"/>
    <property type="match status" value="1"/>
</dbReference>
<dbReference type="PROSITE" id="PS51918">
    <property type="entry name" value="RADICAL_SAM"/>
    <property type="match status" value="1"/>
</dbReference>
<dbReference type="PROSITE" id="PS50926">
    <property type="entry name" value="TRAM"/>
    <property type="match status" value="1"/>
</dbReference>
<gene>
    <name evidence="1" type="primary">miaB</name>
    <name type="ordered locus">MRA_2759</name>
</gene>